<accession>Q8E372</accession>
<dbReference type="EC" id="3.2.1.180"/>
<dbReference type="EMBL" id="AL766854">
    <property type="protein sequence ID" value="CAD47548.1"/>
    <property type="molecule type" value="Genomic_DNA"/>
</dbReference>
<dbReference type="RefSeq" id="WP_000975716.1">
    <property type="nucleotide sequence ID" value="NC_004368.1"/>
</dbReference>
<dbReference type="PDB" id="3ANI">
    <property type="method" value="X-ray"/>
    <property type="resolution" value="2.50 A"/>
    <property type="chains" value="A=1-398"/>
</dbReference>
<dbReference type="PDB" id="3ANJ">
    <property type="method" value="X-ray"/>
    <property type="resolution" value="1.95 A"/>
    <property type="chains" value="A=1-398"/>
</dbReference>
<dbReference type="PDB" id="3ANK">
    <property type="method" value="X-ray"/>
    <property type="resolution" value="2.02 A"/>
    <property type="chains" value="A=1-398"/>
</dbReference>
<dbReference type="PDB" id="3VXD">
    <property type="method" value="X-ray"/>
    <property type="resolution" value="2.00 A"/>
    <property type="chains" value="A/B/C/D=1-398"/>
</dbReference>
<dbReference type="PDB" id="3WUX">
    <property type="method" value="X-ray"/>
    <property type="resolution" value="1.79 A"/>
    <property type="chains" value="A=1-398"/>
</dbReference>
<dbReference type="PDBsum" id="3ANI"/>
<dbReference type="PDBsum" id="3ANJ"/>
<dbReference type="PDBsum" id="3ANK"/>
<dbReference type="PDBsum" id="3VXD"/>
<dbReference type="PDBsum" id="3WUX"/>
<dbReference type="SMR" id="Q8E372"/>
<dbReference type="CAZy" id="GH88">
    <property type="family name" value="Glycoside Hydrolase Family 88"/>
</dbReference>
<dbReference type="KEGG" id="san:gbs1889"/>
<dbReference type="eggNOG" id="COG4225">
    <property type="taxonomic scope" value="Bacteria"/>
</dbReference>
<dbReference type="HOGENOM" id="CLU_027158_1_1_9"/>
<dbReference type="BioCyc" id="MetaCyc:MONOMER-16268"/>
<dbReference type="BRENDA" id="3.2.1.180">
    <property type="organism ID" value="5917"/>
</dbReference>
<dbReference type="EvolutionaryTrace" id="Q8E372"/>
<dbReference type="Proteomes" id="UP000000823">
    <property type="component" value="Chromosome"/>
</dbReference>
<dbReference type="GO" id="GO:0052757">
    <property type="term" value="F:chondroitin hydrolase activity"/>
    <property type="evidence" value="ECO:0000314"/>
    <property type="project" value="UniProtKB"/>
</dbReference>
<dbReference type="GO" id="GO:0102212">
    <property type="term" value="F:unsaturated chondroitin disaccharide hydrolase activity"/>
    <property type="evidence" value="ECO:0007669"/>
    <property type="project" value="UniProtKB-EC"/>
</dbReference>
<dbReference type="GO" id="GO:0000272">
    <property type="term" value="P:polysaccharide catabolic process"/>
    <property type="evidence" value="ECO:0000314"/>
    <property type="project" value="UniProtKB"/>
</dbReference>
<dbReference type="FunFam" id="1.50.10.10:FF:000042">
    <property type="entry name" value="Unsaturated chondroitin disaccharide hydrolase"/>
    <property type="match status" value="1"/>
</dbReference>
<dbReference type="Gene3D" id="1.50.10.10">
    <property type="match status" value="1"/>
</dbReference>
<dbReference type="InterPro" id="IPR008928">
    <property type="entry name" value="6-hairpin_glycosidase_sf"/>
</dbReference>
<dbReference type="InterPro" id="IPR012341">
    <property type="entry name" value="6hp_glycosidase-like_sf"/>
</dbReference>
<dbReference type="InterPro" id="IPR010905">
    <property type="entry name" value="Glyco_hydro_88"/>
</dbReference>
<dbReference type="InterPro" id="IPR052369">
    <property type="entry name" value="UG_Glycosaminoglycan_Hydrolase"/>
</dbReference>
<dbReference type="PANTHER" id="PTHR36845">
    <property type="entry name" value="HYDROLASE, PUTATIVE (AFU_ORTHOLOGUE AFUA_7G05090)-RELATED"/>
    <property type="match status" value="1"/>
</dbReference>
<dbReference type="PANTHER" id="PTHR36845:SF1">
    <property type="entry name" value="HYDROLASE, PUTATIVE (AFU_ORTHOLOGUE AFUA_7G05090)-RELATED"/>
    <property type="match status" value="1"/>
</dbReference>
<dbReference type="Pfam" id="PF07470">
    <property type="entry name" value="Glyco_hydro_88"/>
    <property type="match status" value="1"/>
</dbReference>
<dbReference type="SUPFAM" id="SSF48208">
    <property type="entry name" value="Six-hairpin glycosidases"/>
    <property type="match status" value="1"/>
</dbReference>
<feature type="chain" id="PRO_0000422016" description="Unsaturated chondroitin disaccharide hydrolase">
    <location>
        <begin position="1"/>
        <end position="398"/>
    </location>
</feature>
<feature type="active site" description="Nucleophile" evidence="1">
    <location>
        <position position="115"/>
    </location>
</feature>
<feature type="active site" description="Proton donor" evidence="1">
    <location>
        <position position="175"/>
    </location>
</feature>
<feature type="binding site">
    <location>
        <position position="115"/>
    </location>
    <ligand>
        <name>substrate</name>
    </ligand>
</feature>
<feature type="binding site">
    <location>
        <position position="175"/>
    </location>
    <ligand>
        <name>substrate</name>
    </ligand>
</feature>
<feature type="binding site">
    <location>
        <position position="233"/>
    </location>
    <ligand>
        <name>substrate</name>
    </ligand>
</feature>
<feature type="binding site">
    <location>
        <position position="235"/>
    </location>
    <ligand>
        <name>substrate</name>
    </ligand>
</feature>
<feature type="binding site">
    <location>
        <position position="247"/>
    </location>
    <ligand>
        <name>substrate</name>
    </ligand>
</feature>
<feature type="binding site">
    <location>
        <position position="251"/>
    </location>
    <ligand>
        <name>substrate</name>
    </ligand>
</feature>
<feature type="binding site">
    <location>
        <position position="365"/>
    </location>
    <ligand>
        <name>substrate</name>
    </ligand>
</feature>
<feature type="binding site">
    <location>
        <position position="368"/>
    </location>
    <ligand>
        <name>substrate</name>
    </ligand>
</feature>
<feature type="mutagenesis site" description="Large decrease in activity." evidence="1">
    <original>D</original>
    <variation>N</variation>
    <location>
        <position position="115"/>
    </location>
</feature>
<feature type="mutagenesis site" description="Large decrease in activity." evidence="1">
    <original>D</original>
    <variation>N</variation>
    <location>
        <position position="175"/>
    </location>
</feature>
<feature type="mutagenesis site" description="Able to degrade unsaturated chondroitin disaccharide sulfated at C-6 position of GalNAc residue (delta6S) but abolishes ability to degrade unsaturated chondroitin disaccharide sulfated at C-4 position of GalNAc residue (delta4S)." evidence="1">
    <original>R</original>
    <variation>A</variation>
    <variation>H</variation>
    <location>
        <position position="236"/>
    </location>
</feature>
<feature type="mutagenesis site" description="Prefers unsulfated glycosaminoglycans compared to sulfated glycosaminoglycans." evidence="2">
    <original>S</original>
    <variation>H</variation>
    <location>
        <position position="365"/>
    </location>
</feature>
<feature type="mutagenesis site" description="Affects preference for sulfated glycosaminoglycans compared to sulfated glycosaminoglycans." evidence="2">
    <original>S</original>
    <variation>G</variation>
    <location>
        <position position="368"/>
    </location>
</feature>
<feature type="mutagenesis site" description="Prefers unsulfated glycosaminoglycans compared to sulfated glycosaminoglycans." evidence="2">
    <original>K</original>
    <variation>I</variation>
    <location>
        <position position="370"/>
    </location>
</feature>
<feature type="helix" evidence="7">
    <location>
        <begin position="16"/>
        <end position="19"/>
    </location>
</feature>
<feature type="helix" evidence="7">
    <location>
        <begin position="26"/>
        <end position="47"/>
    </location>
</feature>
<feature type="strand" evidence="7">
    <location>
        <begin position="50"/>
        <end position="52"/>
    </location>
</feature>
<feature type="helix" evidence="7">
    <location>
        <begin position="71"/>
        <end position="85"/>
    </location>
</feature>
<feature type="helix" evidence="7">
    <location>
        <begin position="88"/>
        <end position="106"/>
    </location>
</feature>
<feature type="turn" evidence="5">
    <location>
        <begin position="107"/>
        <end position="110"/>
    </location>
</feature>
<feature type="helix" evidence="6">
    <location>
        <begin position="113"/>
        <end position="115"/>
    </location>
</feature>
<feature type="helix" evidence="7">
    <location>
        <begin position="116"/>
        <end position="120"/>
    </location>
</feature>
<feature type="turn" evidence="7">
    <location>
        <begin position="121"/>
        <end position="123"/>
    </location>
</feature>
<feature type="helix" evidence="7">
    <location>
        <begin position="124"/>
        <end position="131"/>
    </location>
</feature>
<feature type="helix" evidence="7">
    <location>
        <begin position="134"/>
        <end position="149"/>
    </location>
</feature>
<feature type="helix" evidence="7">
    <location>
        <begin position="176"/>
        <end position="179"/>
    </location>
</feature>
<feature type="helix" evidence="7">
    <location>
        <begin position="181"/>
        <end position="190"/>
    </location>
</feature>
<feature type="helix" evidence="7">
    <location>
        <begin position="193"/>
        <end position="210"/>
    </location>
</feature>
<feature type="turn" evidence="7">
    <location>
        <begin position="225"/>
        <end position="227"/>
    </location>
</feature>
<feature type="strand" evidence="6">
    <location>
        <begin position="238"/>
        <end position="240"/>
    </location>
</feature>
<feature type="helix" evidence="7">
    <location>
        <begin position="246"/>
        <end position="263"/>
    </location>
</feature>
<feature type="helix" evidence="7">
    <location>
        <begin position="266"/>
        <end position="281"/>
    </location>
</feature>
<feature type="strand" evidence="7">
    <location>
        <begin position="290"/>
        <end position="292"/>
    </location>
</feature>
<feature type="helix" evidence="7">
    <location>
        <begin position="305"/>
        <end position="319"/>
    </location>
</feature>
<feature type="helix" evidence="7">
    <location>
        <begin position="329"/>
        <end position="346"/>
    </location>
</feature>
<feature type="strand" evidence="7">
    <location>
        <begin position="362"/>
        <end position="365"/>
    </location>
</feature>
<feature type="turn" evidence="7">
    <location>
        <begin position="366"/>
        <end position="369"/>
    </location>
</feature>
<feature type="strand" evidence="7">
    <location>
        <begin position="370"/>
        <end position="374"/>
    </location>
</feature>
<feature type="helix" evidence="7">
    <location>
        <begin position="377"/>
        <end position="391"/>
    </location>
</feature>
<reference key="1">
    <citation type="journal article" date="2002" name="Mol. Microbiol.">
        <title>Genome sequence of Streptococcus agalactiae, a pathogen causing invasive neonatal disease.</title>
        <authorList>
            <person name="Glaser P."/>
            <person name="Rusniok C."/>
            <person name="Buchrieser C."/>
            <person name="Chevalier F."/>
            <person name="Frangeul L."/>
            <person name="Msadek T."/>
            <person name="Zouine M."/>
            <person name="Couve E."/>
            <person name="Lalioui L."/>
            <person name="Poyart C."/>
            <person name="Trieu-Cuot P."/>
            <person name="Kunst F."/>
        </authorList>
    </citation>
    <scope>NUCLEOTIDE SEQUENCE [LARGE SCALE GENOMIC DNA]</scope>
    <source>
        <strain>NEM316</strain>
    </source>
</reference>
<reference key="2">
    <citation type="journal article" date="2009" name="J. Biol. Chem.">
        <title>Substrate specificity of streptococcal unsaturated glucuronyl hydrolases for sulfated glycosaminoglycan.</title>
        <authorList>
            <person name="Maruyama Y."/>
            <person name="Nakamichi Y."/>
            <person name="Itoh T."/>
            <person name="Mikami B."/>
            <person name="Hashimoto W."/>
            <person name="Murata K."/>
        </authorList>
    </citation>
    <scope>FUNCTION</scope>
    <scope>CATALYTIC ACTIVITY</scope>
    <scope>BIOPHYSICOCHEMICAL PROPERTIES</scope>
    <scope>SUBUNIT</scope>
    <scope>ACTIVE SITE</scope>
    <scope>INDUCTION</scope>
    <scope>MUTAGENESIS OF ASP-115; ASP-175 AND ARG-236</scope>
    <source>
        <strain>NEM316</strain>
    </source>
</reference>
<reference key="3">
    <citation type="journal article" date="2011" name="J. Biol. Chem.">
        <title>Structural determinants in streptococcal unsaturated glucuronyl hydrolase for recognition of glycosaminoglycan sulfate groups.</title>
        <authorList>
            <person name="Nakamichi Y."/>
            <person name="Maruyama Y."/>
            <person name="Mikami B."/>
            <person name="Hashimoto W."/>
            <person name="Murata K."/>
        </authorList>
    </citation>
    <scope>X-RAY CRYSTALLOGRAPHY (1.95 ANGSTROMS) OF WILD-TYPE AND MUTANT ASN-155 IN COMPLEX WITH N-ACETYL-D-GALACTOSAMINE 6-SULFATE</scope>
    <scope>FUNCTION</scope>
    <scope>CATALYTIC ACTIVITY</scope>
    <scope>MUTAGENESIS OF SER-365; SER-368 AND LYS-370</scope>
    <source>
        <strain>NEM316</strain>
    </source>
</reference>
<reference key="4">
    <citation type="submission" date="2012-09" db="PDB data bank">
        <title>Crystal structure of unsaturated glucuronyl hydrolase mutant D115N from Streptcoccus agalactiae.</title>
        <authorList>
            <person name="Nakamichi Y."/>
            <person name="Maruyama Y."/>
            <person name="Mikami B."/>
            <person name="Hashimoto W."/>
            <person name="Murata K."/>
        </authorList>
    </citation>
    <scope>X-RAY CRYSTALLOGRAPHY (2.00 ANGSTROMS) OF MUTANT ASN-155</scope>
    <source>
        <strain>NEM316</strain>
    </source>
</reference>
<name>UCDH_STRA3</name>
<evidence type="ECO:0000269" key="1">
    <source>
    </source>
</evidence>
<evidence type="ECO:0000269" key="2">
    <source>
    </source>
</evidence>
<evidence type="ECO:0000305" key="3"/>
<evidence type="ECO:0000305" key="4">
    <source>
    </source>
</evidence>
<evidence type="ECO:0007829" key="5">
    <source>
        <dbReference type="PDB" id="3ANI"/>
    </source>
</evidence>
<evidence type="ECO:0007829" key="6">
    <source>
        <dbReference type="PDB" id="3ANJ"/>
    </source>
</evidence>
<evidence type="ECO:0007829" key="7">
    <source>
        <dbReference type="PDB" id="3WUX"/>
    </source>
</evidence>
<proteinExistence type="evidence at protein level"/>
<sequence>MMKIKPVKVESIENPKRFLNSRLLTKIEVEEAIEKALKQLYINIDYFGEEYPTPATFNNIYKVMDNTEWTNGFWTGCLWLAYEYNQDKKLKNIAHKNVLSFLNRINNRIALDHHDLGFLYTPSCTAEYRINGDVKALEATIKAADKLMERYQEKGGFIQAWGELGYKEHYRLIIDCLLNIQLLFFAYEQTGDEKYRQVAVNHFYASANNVVRDDSSAFHTFYFDPETGEPLKGVTRQGYSDESSWARGQAWGIYGIPLSYRKMKDYQQIILFKGMTNYFLNRLPEDKVSYWDLIFTDGSGQPRDTSATATAVCGIHEMLKYLPEVDPDKETYKYAMHTMLRSLIEQYSNNELIAGRPLLLHGVYSWHSGKGVDEGNIWGDYYYLEALIRFYKDWELYW</sequence>
<comment type="function">
    <text evidence="1 2">Catalyzes the hydrolysis of unsaturated hyaluronate and chondroitin disaccharides. Also degrades unsaturated heparin disaccharides. Releases 4-deoxy-4,5-didehydro D-glucuronic acid or 4-deoxy-4,5-didehydro L-iduronic acid from chondroitin disaccharides, hyaluronan disaccharides and heparin disaccharides and cleaves both glycosidic (1-&gt;3) and (1-&gt;4) bonds. Prefers sulfated glycosaminoglycans compared to unsulfated glycosaminoglycans. Probably required for mammalian cells invasion through the degradation of extracellular sulfated glycosaminoglycans such as chondroitin and hyaluronan.</text>
</comment>
<comment type="catalytic activity">
    <reaction evidence="1 2">
        <text>beta-D-4-deoxy-Delta(4)-GlcpA-(1-&gt;3)-beta-D-GalpNAc6S + H2O = N-acetyl-beta-D-galactosamine 6-sulfate + 5-dehydro-4-deoxy-D-glucuronate</text>
        <dbReference type="Rhea" id="RHEA:31647"/>
        <dbReference type="ChEBI" id="CHEBI:15377"/>
        <dbReference type="ChEBI" id="CHEBI:17117"/>
        <dbReference type="ChEBI" id="CHEBI:63267"/>
        <dbReference type="ChEBI" id="CHEBI:63270"/>
        <dbReference type="EC" id="3.2.1.180"/>
    </reaction>
</comment>
<comment type="biophysicochemical properties">
    <kinetics>
        <KM evidence="1 2">1.27 mM for unsaturated chondroitin disaccharidee (delta0S)</KM>
        <KM evidence="1 2">0.1 mM for unsaturated chondroitin disaccharide sulfated at C-6 position of GalNAc residue (delta6S)</KM>
        <KM evidence="1">0.54 mM for unsaturated chondroitin disaccharide sulfated at C-6 position of GalNAc residue (delta6S)</KM>
        <text evidence="1 2">kcat is 2.69 sec(-1) with unsaturated chondroitin (delta0S) (PubMed:21147778). kcat is 24 sec(-1) with unsaturated chondroitin disaccharide sulfated at C-6 position of GalNAc residue (delta6S) (PubMed:19416976). kcat is 10.2 sec(-1) with unsaturated chondroitin disaccharide sulfated at C-6 position of GalNAc residue (delta6S) (PubMed:21147778).</text>
    </kinetics>
    <phDependence>
        <text evidence="1">Optimum pH is 5.5.</text>
    </phDependence>
    <temperatureDependence>
        <text evidence="1">Optimum temperature is 37 degrees Celsius.</text>
    </temperatureDependence>
</comment>
<comment type="subunit">
    <text evidence="1 2">Monomer.</text>
</comment>
<comment type="induction">
    <text evidence="1">Constitutively expressed. Expression level increases in the presence of glycosaminoglycan.</text>
</comment>
<comment type="miscellaneous">
    <text evidence="4">Ser-365 and Ser-368 bind the sulfated group in the substrate and determine the preference for sulfated glycosaminoglycans compared to unsulfated glycosaminoglycans.</text>
</comment>
<comment type="similarity">
    <text evidence="3">Belongs to the glycosyl hydrolase 88 family.</text>
</comment>
<organism>
    <name type="scientific">Streptococcus agalactiae serotype III (strain NEM316)</name>
    <dbReference type="NCBI Taxonomy" id="211110"/>
    <lineage>
        <taxon>Bacteria</taxon>
        <taxon>Bacillati</taxon>
        <taxon>Bacillota</taxon>
        <taxon>Bacilli</taxon>
        <taxon>Lactobacillales</taxon>
        <taxon>Streptococcaceae</taxon>
        <taxon>Streptococcus</taxon>
    </lineage>
</organism>
<gene>
    <name type="ordered locus">gbs1889</name>
</gene>
<keyword id="KW-0002">3D-structure</keyword>
<keyword id="KW-0119">Carbohydrate metabolism</keyword>
<keyword id="KW-0326">Glycosidase</keyword>
<keyword id="KW-0378">Hydrolase</keyword>
<keyword id="KW-0624">Polysaccharide degradation</keyword>
<keyword id="KW-0843">Virulence</keyword>
<protein>
    <recommendedName>
        <fullName>Unsaturated chondroitin disaccharide hydrolase</fullName>
        <ecNumber>3.2.1.180</ecNumber>
    </recommendedName>
    <alternativeName>
        <fullName>Unsaturated glucuronyl hydrolase</fullName>
        <shortName>SagUGL</shortName>
    </alternativeName>
</protein>